<feature type="signal peptide" evidence="3">
    <location>
        <begin position="1"/>
        <end position="17"/>
    </location>
</feature>
<feature type="chain" id="PRO_0000025467" description="Receptor-type tyrosine-protein phosphatase V">
    <location>
        <begin position="18"/>
        <end position="1711"/>
    </location>
</feature>
<feature type="topological domain" description="Extracellular" evidence="3">
    <location>
        <begin position="18"/>
        <end position="1074"/>
    </location>
</feature>
<feature type="transmembrane region" description="Helical" evidence="3">
    <location>
        <begin position="1075"/>
        <end position="1095"/>
    </location>
</feature>
<feature type="topological domain" description="Cytoplasmic" evidence="3">
    <location>
        <begin position="1096"/>
        <end position="1711"/>
    </location>
</feature>
<feature type="domain" description="Fibronectin type-III 1" evidence="5">
    <location>
        <begin position="37"/>
        <end position="129"/>
    </location>
</feature>
<feature type="domain" description="Fibronectin type-III 2" evidence="5">
    <location>
        <begin position="130"/>
        <end position="222"/>
    </location>
</feature>
<feature type="domain" description="Fibronectin type-III 3" evidence="5">
    <location>
        <begin position="218"/>
        <end position="305"/>
    </location>
</feature>
<feature type="domain" description="Fibronectin type-III 4" evidence="5">
    <location>
        <begin position="306"/>
        <end position="391"/>
    </location>
</feature>
<feature type="domain" description="Fibronectin type-III 5" evidence="5">
    <location>
        <begin position="393"/>
        <end position="470"/>
    </location>
</feature>
<feature type="domain" description="Fibronectin type-III 6" evidence="5">
    <location>
        <begin position="475"/>
        <end position="569"/>
    </location>
</feature>
<feature type="domain" description="Fibronectin type-III 7" evidence="5">
    <location>
        <begin position="565"/>
        <end position="654"/>
    </location>
</feature>
<feature type="domain" description="Fibronectin type-III 8" evidence="5">
    <location>
        <begin position="655"/>
        <end position="749"/>
    </location>
</feature>
<feature type="domain" description="Fibronectin type-III 9" evidence="5">
    <location>
        <begin position="744"/>
        <end position="831"/>
    </location>
</feature>
<feature type="domain" description="Fibronectin type-III 10" evidence="5">
    <location>
        <begin position="832"/>
        <end position="926"/>
    </location>
</feature>
<feature type="domain" description="Tyrosine-protein phosphatase 1" evidence="4">
    <location>
        <begin position="1150"/>
        <end position="1409"/>
    </location>
</feature>
<feature type="domain" description="Tyrosine-protein phosphatase 2" evidence="4">
    <location>
        <begin position="1427"/>
        <end position="1696"/>
    </location>
</feature>
<feature type="active site" description="Phosphocysteine intermediate" evidence="4 6">
    <location>
        <position position="1350"/>
    </location>
</feature>
<feature type="binding site" evidence="1">
    <location>
        <position position="1316"/>
    </location>
    <ligand>
        <name>substrate</name>
    </ligand>
</feature>
<feature type="binding site" evidence="1">
    <location>
        <begin position="1350"/>
        <end position="1356"/>
    </location>
    <ligand>
        <name>substrate</name>
    </ligand>
</feature>
<feature type="binding site" evidence="1">
    <location>
        <position position="1394"/>
    </location>
    <ligand>
        <name>substrate</name>
    </ligand>
</feature>
<feature type="glycosylation site" description="N-linked (GlcNAc...) asparagine" evidence="3">
    <location>
        <position position="42"/>
    </location>
</feature>
<feature type="glycosylation site" description="N-linked (GlcNAc...) asparagine" evidence="3">
    <location>
        <position position="74"/>
    </location>
</feature>
<feature type="glycosylation site" description="N-linked (GlcNAc...) asparagine" evidence="3">
    <location>
        <position position="89"/>
    </location>
</feature>
<feature type="glycosylation site" description="N-linked (GlcNAc...) asparagine" evidence="3">
    <location>
        <position position="117"/>
    </location>
</feature>
<feature type="glycosylation site" description="N-linked (GlcNAc...) asparagine" evidence="3">
    <location>
        <position position="174"/>
    </location>
</feature>
<feature type="glycosylation site" description="N-linked (GlcNAc...) asparagine" evidence="3">
    <location>
        <position position="239"/>
    </location>
</feature>
<feature type="glycosylation site" description="N-linked (GlcNAc...) asparagine" evidence="3">
    <location>
        <position position="259"/>
    </location>
</feature>
<feature type="glycosylation site" description="N-linked (GlcNAc...) asparagine" evidence="3">
    <location>
        <position position="431"/>
    </location>
</feature>
<feature type="glycosylation site" description="N-linked (GlcNAc...) asparagine" evidence="3">
    <location>
        <position position="570"/>
    </location>
</feature>
<feature type="glycosylation site" description="N-linked (GlcNAc...) asparagine" evidence="3">
    <location>
        <position position="620"/>
    </location>
</feature>
<feature type="glycosylation site" description="N-linked (GlcNAc...) asparagine" evidence="3">
    <location>
        <position position="649"/>
    </location>
</feature>
<feature type="glycosylation site" description="N-linked (GlcNAc...) asparagine" evidence="3">
    <location>
        <position position="663"/>
    </location>
</feature>
<feature type="glycosylation site" description="N-linked (GlcNAc...) asparagine" evidence="3">
    <location>
        <position position="737"/>
    </location>
</feature>
<feature type="glycosylation site" description="N-linked (GlcNAc...) asparagine" evidence="3">
    <location>
        <position position="851"/>
    </location>
</feature>
<feature type="glycosylation site" description="N-linked (GlcNAc...) asparagine" evidence="3">
    <location>
        <position position="882"/>
    </location>
</feature>
<feature type="glycosylation site" description="N-linked (GlcNAc...) asparagine" evidence="3">
    <location>
        <position position="970"/>
    </location>
</feature>
<feature type="glycosylation site" description="N-linked (GlcNAc...) asparagine" evidence="3">
    <location>
        <position position="982"/>
    </location>
</feature>
<name>PTPRV_RAT</name>
<dbReference type="EC" id="3.1.3.48" evidence="7"/>
<dbReference type="EMBL" id="L36884">
    <property type="protein sequence ID" value="AAA63911.1"/>
    <property type="molecule type" value="mRNA"/>
</dbReference>
<dbReference type="PIR" id="A55148">
    <property type="entry name" value="A55148"/>
</dbReference>
<dbReference type="RefSeq" id="NP_149090.1">
    <molecule id="Q64612-1"/>
    <property type="nucleotide sequence ID" value="NM_033099.1"/>
</dbReference>
<dbReference type="SMR" id="Q64612"/>
<dbReference type="STRING" id="10116.ENSRNOP00000007597"/>
<dbReference type="GlyCosmos" id="Q64612">
    <property type="glycosylation" value="17 sites, No reported glycans"/>
</dbReference>
<dbReference type="GlyGen" id="Q64612">
    <property type="glycosylation" value="17 sites"/>
</dbReference>
<dbReference type="PaxDb" id="10116-ENSRNOP00000007597"/>
<dbReference type="GeneID" id="64576"/>
<dbReference type="KEGG" id="rno:64576"/>
<dbReference type="UCSC" id="RGD:621123">
    <molecule id="Q64612-1"/>
    <property type="organism name" value="rat"/>
</dbReference>
<dbReference type="AGR" id="RGD:621123"/>
<dbReference type="CTD" id="13924"/>
<dbReference type="RGD" id="621123">
    <property type="gene designation" value="Ptprv"/>
</dbReference>
<dbReference type="eggNOG" id="KOG0791">
    <property type="taxonomic scope" value="Eukaryota"/>
</dbReference>
<dbReference type="InParanoid" id="Q64612"/>
<dbReference type="OrthoDB" id="63598at9989"/>
<dbReference type="PhylomeDB" id="Q64612"/>
<dbReference type="PRO" id="PR:Q64612"/>
<dbReference type="Proteomes" id="UP000002494">
    <property type="component" value="Unplaced"/>
</dbReference>
<dbReference type="GO" id="GO:0016020">
    <property type="term" value="C:membrane"/>
    <property type="evidence" value="ECO:0007669"/>
    <property type="project" value="UniProtKB-SubCell"/>
</dbReference>
<dbReference type="GO" id="GO:0004725">
    <property type="term" value="F:protein tyrosine phosphatase activity"/>
    <property type="evidence" value="ECO:0000315"/>
    <property type="project" value="RGD"/>
</dbReference>
<dbReference type="GO" id="GO:0007411">
    <property type="term" value="P:axon guidance"/>
    <property type="evidence" value="ECO:0000318"/>
    <property type="project" value="GO_Central"/>
</dbReference>
<dbReference type="GO" id="GO:0046849">
    <property type="term" value="P:bone remodeling"/>
    <property type="evidence" value="ECO:0000270"/>
    <property type="project" value="RGD"/>
</dbReference>
<dbReference type="GO" id="GO:0071320">
    <property type="term" value="P:cellular response to cAMP"/>
    <property type="evidence" value="ECO:0000270"/>
    <property type="project" value="RGD"/>
</dbReference>
<dbReference type="GO" id="GO:0071364">
    <property type="term" value="P:cellular response to epidermal growth factor stimulus"/>
    <property type="evidence" value="ECO:0000270"/>
    <property type="project" value="RGD"/>
</dbReference>
<dbReference type="GO" id="GO:0071374">
    <property type="term" value="P:cellular response to parathyroid hormone stimulus"/>
    <property type="evidence" value="ECO:0000270"/>
    <property type="project" value="RGD"/>
</dbReference>
<dbReference type="GO" id="GO:0036035">
    <property type="term" value="P:osteoclast development"/>
    <property type="evidence" value="ECO:0000270"/>
    <property type="project" value="RGD"/>
</dbReference>
<dbReference type="GO" id="GO:0007165">
    <property type="term" value="P:signal transduction"/>
    <property type="evidence" value="ECO:0000318"/>
    <property type="project" value="GO_Central"/>
</dbReference>
<dbReference type="GO" id="GO:0007283">
    <property type="term" value="P:spermatogenesis"/>
    <property type="evidence" value="ECO:0000270"/>
    <property type="project" value="RGD"/>
</dbReference>
<dbReference type="CDD" id="cd00063">
    <property type="entry name" value="FN3"/>
    <property type="match status" value="2"/>
</dbReference>
<dbReference type="FunFam" id="2.60.40.10:FF:000369">
    <property type="entry name" value="Protein tyrosine phosphatase, receptor type B"/>
    <property type="match status" value="3"/>
</dbReference>
<dbReference type="FunFam" id="3.90.190.10:FF:000009">
    <property type="entry name" value="Receptor-type tyrosine-protein phosphatase beta"/>
    <property type="match status" value="1"/>
</dbReference>
<dbReference type="FunFam" id="3.90.190.10:FF:000149">
    <property type="entry name" value="Receptor-type tyrosine-protein phosphatase V"/>
    <property type="match status" value="1"/>
</dbReference>
<dbReference type="Gene3D" id="2.60.40.10">
    <property type="entry name" value="Immunoglobulins"/>
    <property type="match status" value="3"/>
</dbReference>
<dbReference type="Gene3D" id="3.90.190.10">
    <property type="entry name" value="Protein tyrosine phosphatase superfamily"/>
    <property type="match status" value="2"/>
</dbReference>
<dbReference type="InterPro" id="IPR003961">
    <property type="entry name" value="FN3_dom"/>
</dbReference>
<dbReference type="InterPro" id="IPR036116">
    <property type="entry name" value="FN3_sf"/>
</dbReference>
<dbReference type="InterPro" id="IPR013783">
    <property type="entry name" value="Ig-like_fold"/>
</dbReference>
<dbReference type="InterPro" id="IPR029021">
    <property type="entry name" value="Prot-tyrosine_phosphatase-like"/>
</dbReference>
<dbReference type="InterPro" id="IPR000242">
    <property type="entry name" value="PTP_cat"/>
</dbReference>
<dbReference type="InterPro" id="IPR041201">
    <property type="entry name" value="PTPRJ_TM"/>
</dbReference>
<dbReference type="InterPro" id="IPR050713">
    <property type="entry name" value="RTP_Phos/Ushers"/>
</dbReference>
<dbReference type="InterPro" id="IPR016130">
    <property type="entry name" value="Tyr_Pase_AS"/>
</dbReference>
<dbReference type="InterPro" id="IPR003595">
    <property type="entry name" value="Tyr_Pase_cat"/>
</dbReference>
<dbReference type="InterPro" id="IPR000387">
    <property type="entry name" value="Tyr_Pase_dom"/>
</dbReference>
<dbReference type="PANTHER" id="PTHR46957">
    <property type="entry name" value="CYTOKINE RECEPTOR"/>
    <property type="match status" value="1"/>
</dbReference>
<dbReference type="PANTHER" id="PTHR46957:SF10">
    <property type="entry name" value="PROTEIN TYROSINE PHOSPHATASE, RECEPTOR TYPE, H"/>
    <property type="match status" value="1"/>
</dbReference>
<dbReference type="Pfam" id="PF00041">
    <property type="entry name" value="fn3"/>
    <property type="match status" value="2"/>
</dbReference>
<dbReference type="Pfam" id="PF18861">
    <property type="entry name" value="PTP_tm"/>
    <property type="match status" value="1"/>
</dbReference>
<dbReference type="Pfam" id="PF00102">
    <property type="entry name" value="Y_phosphatase"/>
    <property type="match status" value="2"/>
</dbReference>
<dbReference type="PRINTS" id="PR00700">
    <property type="entry name" value="PRTYPHPHTASE"/>
</dbReference>
<dbReference type="SMART" id="SM00060">
    <property type="entry name" value="FN3"/>
    <property type="match status" value="8"/>
</dbReference>
<dbReference type="SMART" id="SM00194">
    <property type="entry name" value="PTPc"/>
    <property type="match status" value="1"/>
</dbReference>
<dbReference type="SMART" id="SM00404">
    <property type="entry name" value="PTPc_motif"/>
    <property type="match status" value="2"/>
</dbReference>
<dbReference type="SUPFAM" id="SSF52799">
    <property type="entry name" value="(Phosphotyrosine protein) phosphatases II"/>
    <property type="match status" value="2"/>
</dbReference>
<dbReference type="SUPFAM" id="SSF49265">
    <property type="entry name" value="Fibronectin type III"/>
    <property type="match status" value="8"/>
</dbReference>
<dbReference type="PROSITE" id="PS50853">
    <property type="entry name" value="FN3"/>
    <property type="match status" value="5"/>
</dbReference>
<dbReference type="PROSITE" id="PS00383">
    <property type="entry name" value="TYR_PHOSPHATASE_1"/>
    <property type="match status" value="1"/>
</dbReference>
<dbReference type="PROSITE" id="PS50056">
    <property type="entry name" value="TYR_PHOSPHATASE_2"/>
    <property type="match status" value="1"/>
</dbReference>
<dbReference type="PROSITE" id="PS50055">
    <property type="entry name" value="TYR_PHOSPHATASE_PTP"/>
    <property type="match status" value="2"/>
</dbReference>
<proteinExistence type="evidence at protein level"/>
<gene>
    <name type="primary">Ptprv</name>
    <name type="synonym">Esp</name>
</gene>
<organism>
    <name type="scientific">Rattus norvegicus</name>
    <name type="common">Rat</name>
    <dbReference type="NCBI Taxonomy" id="10116"/>
    <lineage>
        <taxon>Eukaryota</taxon>
        <taxon>Metazoa</taxon>
        <taxon>Chordata</taxon>
        <taxon>Craniata</taxon>
        <taxon>Vertebrata</taxon>
        <taxon>Euteleostomi</taxon>
        <taxon>Mammalia</taxon>
        <taxon>Eutheria</taxon>
        <taxon>Euarchontoglires</taxon>
        <taxon>Glires</taxon>
        <taxon>Rodentia</taxon>
        <taxon>Myomorpha</taxon>
        <taxon>Muroidea</taxon>
        <taxon>Muridae</taxon>
        <taxon>Murinae</taxon>
        <taxon>Rattus</taxon>
    </lineage>
</organism>
<accession>Q64612</accession>
<sequence length="1711" mass="187293">MRPLILLAALLWLQGFLAEDDACSSLEGSPDRQGGGPLLSVNVSSHGKSTSLFLSWVAAELGGFDYALSLRSVNSSGSPEGQQLQAHTNESGFEFHGLVPGSRYQLKLTVLRPCWQNVTITLTARTAPTVVRGLQLHSAGSPARLEASWSDAPGDQDSYQLLLYHLESQTLACNVSVSPDTLSYSFGDLLPGTQYVLEVITWAGSLHAKTSILQWTEPVPPDHLALRALGTSSLQAFWNSSEGATSFHLMLTDLLGGTNTTAVIRQGVSTHTFLHLSPGTPHELKICASAGPHQIWGPSATEWTYPSYPSDLVLTPLRNELWASWKAGLGARDGYVLKLSGPMESTSTLGPEECNAVFPGPLPPGHYTLQLKVLAGPYDAWVEGSTWLAESAALPREVPGARLWLDGLEASKQPGRRALLYSDDAPGSLGNISVPSGATHVIFCGLVPGAHYRVDIASSTGDISQSISGYTSPLPPQSLEVISRSSPSDLTIAWGPAPGQLEGYKVTWHQDGSQRSPGDLVDLGPDTLSLTLKSLVPGSCYTVSAWAWAGNLDSDSQKIHSCTRPAPPTNLSLGFAHQPAALKASWYHPPGGRDAFHLRLYRLRPLTLESEKVLPREAQNFSWAQLTAGCEFQVQLSTLWGSERSSSANATGWTPPSAPTLVNVTSDAPTQLQVSWAHVPGGRSRYQVTLYQESTRTATSIMGPKEDGTSFLGLTPGTKYKVEVISWAGPLYTAAANVSAWTYPLIPNELLVSMQAGSAVVNLAWPSGPLGQGACHAQLSDAGHLSWEQPLKLGQELFMLRDLTPGHTISMSVRCRAGPLQASTHLVVLSVEPGPVEDVLCHPEATYLALNWTMPAGDVDVCLVVVERLVPGGGTHFVFQVNTSGDALLLPNLMPTTSYRLSLTVLGRNSRWSRAVSLVCSTSAEAWHPPELAEPPQVELGTGMGVTVMRGMFGKDDGQIQWYGIIATINMTLAQPSREAINYTWYDHYYRGCESFLALLFPNPFYPEPWAGPRSWTVPVGTEDCDNTQEICNGRLKSGFQYRFSVVAFSRLNTPETILAFSAFSEPRASISLAIIPLTVMLGAVVGSIVIVCAVLCLLRWRCLKGPRSEKDGFSKELMPYNLWRTHRPIPIHSFRQSYEAKSAHAHQTFFQEFEELKEVGKDQPRLEAEHPDNIIKNRYPHVLPYDHSRVRLTQLPGEPHSDYINANFIPGYSHTQEIIATQGPLKKTLEDFWRLVWEQQVHVIIMLTVGMENGRVLCEHYWPANSTPVTHGHITIHLLAEEPEDEWTRREFQLQHGTEQKQRRVKQLQFTTWPDHSVPEAPSSLLAFVELVQEQVQATQGKGPILVHCSAGVGRTGTFVALLRLLRQLEEEKVADVFNTVYILRLHRPLMIQTLSQYIFLHSCLLNKILEGPPDSSDSGPISVMDFAQACAKRAANANAGFLKEYKLLKQAIKDGTGSLLPPPDYNQNSIVSRRHSQEQFALVEECPEDSMLEASLFPGGPSGCDHVVLTGSAGPKELWEMVWEHDAHVLVSLGLPDTKEKPPDIWPVEMQPIVTDMVTVHRVSESNTTTGWPSTLFRVIHGESGKERQVQCLQFPCSESGCELPANTLLTFLDAVGQCCFRGKSKKPGTLLSHSSKNTNQLGTFLAMEQLLQQAGTERTVDVFNVALKQSQACGLMTPTLEQYIYLYNCLNSALLNGLPRAGKWPAPC</sequence>
<protein>
    <recommendedName>
        <fullName>Receptor-type tyrosine-protein phosphatase V</fullName>
        <shortName>R-PTP-V</shortName>
        <ecNumber evidence="7">3.1.3.48</ecNumber>
    </recommendedName>
    <alternativeName>
        <fullName>Embryonic stem cell protein-tyrosine phosphatase</fullName>
        <shortName>ES cell phosphatase</shortName>
    </alternativeName>
    <alternativeName>
        <fullName>Osteotesticular protein-tyrosine phosphatase</fullName>
        <shortName>OST-PTP</shortName>
    </alternativeName>
</protein>
<reference key="1">
    <citation type="journal article" date="1994" name="J. Biol. Chem.">
        <title>Identification of a hormonally regulated protein tyrosine phosphatase associated with bone and testicular differentiation.</title>
        <authorList>
            <person name="Mauro L.J."/>
            <person name="Olmsted E.A."/>
            <person name="Skrobacz B.M."/>
            <person name="Mourey R.J."/>
            <person name="Davis A.R."/>
            <person name="Dixon J.E."/>
        </authorList>
    </citation>
    <scope>NUCLEOTIDE SEQUENCE [MRNA]</scope>
    <scope>FUNCTION</scope>
    <scope>CATALYTIC ACTIVITY</scope>
    <scope>BIOPHYSICOCHEMICAL PROPERTIES</scope>
    <scope>TISSUE SPECIFICITY</scope>
    <scope>DEVELOPMENTAL STAGE</scope>
    <scope>INDUCTION</scope>
    <source>
        <tissue>Osteosarcoma</tissue>
    </source>
</reference>
<evidence type="ECO:0000250" key="1"/>
<evidence type="ECO:0000250" key="2">
    <source>
        <dbReference type="UniProtKB" id="P70289"/>
    </source>
</evidence>
<evidence type="ECO:0000255" key="3"/>
<evidence type="ECO:0000255" key="4">
    <source>
        <dbReference type="PROSITE-ProRule" id="PRU00160"/>
    </source>
</evidence>
<evidence type="ECO:0000255" key="5">
    <source>
        <dbReference type="PROSITE-ProRule" id="PRU00316"/>
    </source>
</evidence>
<evidence type="ECO:0000255" key="6">
    <source>
        <dbReference type="PROSITE-ProRule" id="PRU10044"/>
    </source>
</evidence>
<evidence type="ECO:0000269" key="7">
    <source>
    </source>
</evidence>
<evidence type="ECO:0000305" key="8"/>
<keyword id="KW-0025">Alternative splicing</keyword>
<keyword id="KW-0325">Glycoprotein</keyword>
<keyword id="KW-0378">Hydrolase</keyword>
<keyword id="KW-0472">Membrane</keyword>
<keyword id="KW-0904">Protein phosphatase</keyword>
<keyword id="KW-1185">Reference proteome</keyword>
<keyword id="KW-0677">Repeat</keyword>
<keyword id="KW-0732">Signal</keyword>
<keyword id="KW-0812">Transmembrane</keyword>
<keyword id="KW-1133">Transmembrane helix</keyword>
<comment type="function">
    <text evidence="2 7">Protein tyrosine phosphatase that acts as a regulator of energy metabolism (By similarity). Prevents decarboxylation of osteocalcin (Bglap) via an indirect mechanism, preventing the hormone activity of osteocalcin (By similarity). Functions in signaling pathways during bone remodeling, as well as serve a broader role in cell interactions associated with differentiation in bone and testis (PubMed:7527035). Associated with differentiation in bone and testis (PubMed:7527035).</text>
</comment>
<comment type="catalytic activity">
    <reaction evidence="6 7">
        <text>O-phospho-L-tyrosyl-[protein] + H2O = L-tyrosyl-[protein] + phosphate</text>
        <dbReference type="Rhea" id="RHEA:10684"/>
        <dbReference type="Rhea" id="RHEA-COMP:10136"/>
        <dbReference type="Rhea" id="RHEA-COMP:20101"/>
        <dbReference type="ChEBI" id="CHEBI:15377"/>
        <dbReference type="ChEBI" id="CHEBI:43474"/>
        <dbReference type="ChEBI" id="CHEBI:46858"/>
        <dbReference type="ChEBI" id="CHEBI:61978"/>
        <dbReference type="EC" id="3.1.3.48"/>
    </reaction>
</comment>
<comment type="biophysicochemical properties">
    <phDependence>
        <text evidence="7">Optimum pH is 5.6.</text>
    </phDependence>
</comment>
<comment type="subcellular location">
    <subcellularLocation>
        <location>Membrane</location>
        <topology>Single-pass type I membrane protein</topology>
    </subcellularLocation>
</comment>
<comment type="alternative products">
    <event type="alternative splicing"/>
    <isoform>
        <id>Q64612-1</id>
        <name>1</name>
        <sequence type="displayed"/>
    </isoform>
    <isoform>
        <id>Q64612-2</id>
        <name>2</name>
        <sequence type="not described"/>
    </isoform>
    <text>A presumed alternate transcript of 4.8-5.0 kilobases, which may lack PTP domains, is present in proliferating osteoblasts, but not detectable at other stages.</text>
</comment>
<comment type="tissue specificity">
    <text evidence="7">Bone and testis. In the latter, restricted to the basal portion of the seminiferous tubule.</text>
</comment>
<comment type="developmental stage">
    <text evidence="7">Up-regulated in differentiating cultures of primary osteoblasts and down-regulated in late stage mineralizing cultures. In testis, expression is highest between stages I and VII when maturing spermatids remain buried within the Sertoli epithelium.</text>
</comment>
<comment type="induction">
    <text evidence="7">By parathyroid hormone and cAMP analogs.</text>
</comment>
<comment type="PTM">
    <text>The cytoplasmic domain contains potential phosphorylation sites.</text>
</comment>
<comment type="similarity">
    <text evidence="8">Belongs to the protein-tyrosine phosphatase family. Receptor class 3 subfamily.</text>
</comment>